<proteinExistence type="inferred from homology"/>
<keyword id="KW-0997">Cell inner membrane</keyword>
<keyword id="KW-1003">Cell membrane</keyword>
<keyword id="KW-0406">Ion transport</keyword>
<keyword id="KW-0472">Membrane</keyword>
<keyword id="KW-0630">Potassium</keyword>
<keyword id="KW-0633">Potassium transport</keyword>
<keyword id="KW-1185">Reference proteome</keyword>
<keyword id="KW-0812">Transmembrane</keyword>
<keyword id="KW-1133">Transmembrane helix</keyword>
<keyword id="KW-0813">Transport</keyword>
<reference key="1">
    <citation type="submission" date="2007-05" db="EMBL/GenBank/DDBJ databases">
        <title>Complete sequence of Geobacter uraniireducens Rf4.</title>
        <authorList>
            <consortium name="US DOE Joint Genome Institute"/>
            <person name="Copeland A."/>
            <person name="Lucas S."/>
            <person name="Lapidus A."/>
            <person name="Barry K."/>
            <person name="Detter J.C."/>
            <person name="Glavina del Rio T."/>
            <person name="Hammon N."/>
            <person name="Israni S."/>
            <person name="Dalin E."/>
            <person name="Tice H."/>
            <person name="Pitluck S."/>
            <person name="Chertkov O."/>
            <person name="Brettin T."/>
            <person name="Bruce D."/>
            <person name="Han C."/>
            <person name="Schmutz J."/>
            <person name="Larimer F."/>
            <person name="Land M."/>
            <person name="Hauser L."/>
            <person name="Kyrpides N."/>
            <person name="Mikhailova N."/>
            <person name="Shelobolina E."/>
            <person name="Aklujkar M."/>
            <person name="Lovley D."/>
            <person name="Richardson P."/>
        </authorList>
    </citation>
    <scope>NUCLEOTIDE SEQUENCE [LARGE SCALE GENOMIC DNA]</scope>
    <source>
        <strain>ATCC BAA-1134 / JCM 13001 / Rf4</strain>
    </source>
</reference>
<feature type="chain" id="PRO_1000078782" description="Potassium-transporting ATPase potassium-binding subunit">
    <location>
        <begin position="1"/>
        <end position="592"/>
    </location>
</feature>
<feature type="transmembrane region" description="Helical" evidence="1">
    <location>
        <begin position="6"/>
        <end position="26"/>
    </location>
</feature>
<feature type="transmembrane region" description="Helical" evidence="1">
    <location>
        <begin position="67"/>
        <end position="87"/>
    </location>
</feature>
<feature type="transmembrane region" description="Helical" evidence="1">
    <location>
        <begin position="136"/>
        <end position="156"/>
    </location>
</feature>
<feature type="transmembrane region" description="Helical" evidence="1">
    <location>
        <begin position="179"/>
        <end position="199"/>
    </location>
</feature>
<feature type="transmembrane region" description="Helical" evidence="1">
    <location>
        <begin position="283"/>
        <end position="303"/>
    </location>
</feature>
<feature type="transmembrane region" description="Helical" evidence="1">
    <location>
        <begin position="312"/>
        <end position="332"/>
    </location>
</feature>
<feature type="transmembrane region" description="Helical" evidence="1">
    <location>
        <begin position="359"/>
        <end position="379"/>
    </location>
</feature>
<feature type="transmembrane region" description="Helical" evidence="1">
    <location>
        <begin position="389"/>
        <end position="409"/>
    </location>
</feature>
<feature type="transmembrane region" description="Helical" evidence="1">
    <location>
        <begin position="411"/>
        <end position="431"/>
    </location>
</feature>
<feature type="transmembrane region" description="Helical" evidence="1">
    <location>
        <begin position="450"/>
        <end position="470"/>
    </location>
</feature>
<feature type="transmembrane region" description="Helical" evidence="1">
    <location>
        <begin position="489"/>
        <end position="511"/>
    </location>
</feature>
<feature type="transmembrane region" description="Helical" evidence="1">
    <location>
        <begin position="519"/>
        <end position="539"/>
    </location>
</feature>
<feature type="transmembrane region" description="Helical" evidence="1">
    <location>
        <begin position="559"/>
        <end position="579"/>
    </location>
</feature>
<name>KDPA_GEOUR</name>
<gene>
    <name evidence="1" type="primary">kdpA</name>
    <name type="ordered locus">Gura_1227</name>
</gene>
<dbReference type="EMBL" id="CP000698">
    <property type="protein sequence ID" value="ABQ25431.1"/>
    <property type="molecule type" value="Genomic_DNA"/>
</dbReference>
<dbReference type="RefSeq" id="WP_011938153.1">
    <property type="nucleotide sequence ID" value="NC_009483.1"/>
</dbReference>
<dbReference type="SMR" id="A5GAG2"/>
<dbReference type="STRING" id="351605.Gura_1227"/>
<dbReference type="KEGG" id="gur:Gura_1227"/>
<dbReference type="HOGENOM" id="CLU_018614_3_0_7"/>
<dbReference type="OrthoDB" id="9763796at2"/>
<dbReference type="Proteomes" id="UP000006695">
    <property type="component" value="Chromosome"/>
</dbReference>
<dbReference type="GO" id="GO:0005886">
    <property type="term" value="C:plasma membrane"/>
    <property type="evidence" value="ECO:0007669"/>
    <property type="project" value="UniProtKB-SubCell"/>
</dbReference>
<dbReference type="GO" id="GO:0008556">
    <property type="term" value="F:P-type potassium transmembrane transporter activity"/>
    <property type="evidence" value="ECO:0007669"/>
    <property type="project" value="InterPro"/>
</dbReference>
<dbReference type="GO" id="GO:0030955">
    <property type="term" value="F:potassium ion binding"/>
    <property type="evidence" value="ECO:0007669"/>
    <property type="project" value="UniProtKB-UniRule"/>
</dbReference>
<dbReference type="HAMAP" id="MF_00275">
    <property type="entry name" value="KdpA"/>
    <property type="match status" value="1"/>
</dbReference>
<dbReference type="InterPro" id="IPR004623">
    <property type="entry name" value="KdpA"/>
</dbReference>
<dbReference type="NCBIfam" id="TIGR00680">
    <property type="entry name" value="kdpA"/>
    <property type="match status" value="1"/>
</dbReference>
<dbReference type="PANTHER" id="PTHR30607">
    <property type="entry name" value="POTASSIUM-TRANSPORTING ATPASE A CHAIN"/>
    <property type="match status" value="1"/>
</dbReference>
<dbReference type="PANTHER" id="PTHR30607:SF2">
    <property type="entry name" value="POTASSIUM-TRANSPORTING ATPASE POTASSIUM-BINDING SUBUNIT"/>
    <property type="match status" value="1"/>
</dbReference>
<dbReference type="Pfam" id="PF03814">
    <property type="entry name" value="KdpA"/>
    <property type="match status" value="1"/>
</dbReference>
<dbReference type="PIRSF" id="PIRSF001294">
    <property type="entry name" value="K_ATPaseA"/>
    <property type="match status" value="1"/>
</dbReference>
<organism>
    <name type="scientific">Geotalea uraniireducens (strain Rf4)</name>
    <name type="common">Geobacter uraniireducens</name>
    <dbReference type="NCBI Taxonomy" id="351605"/>
    <lineage>
        <taxon>Bacteria</taxon>
        <taxon>Pseudomonadati</taxon>
        <taxon>Thermodesulfobacteriota</taxon>
        <taxon>Desulfuromonadia</taxon>
        <taxon>Geobacterales</taxon>
        <taxon>Geobacteraceae</taxon>
        <taxon>Geotalea</taxon>
    </lineage>
</organism>
<accession>A5GAG2</accession>
<protein>
    <recommendedName>
        <fullName evidence="1">Potassium-transporting ATPase potassium-binding subunit</fullName>
    </recommendedName>
    <alternativeName>
        <fullName evidence="1">ATP phosphohydrolase [potassium-transporting] A chain</fullName>
    </alternativeName>
    <alternativeName>
        <fullName evidence="1">Potassium-binding and translocating subunit A</fullName>
    </alternativeName>
    <alternativeName>
        <fullName evidence="1">Potassium-translocating ATPase A chain</fullName>
    </alternativeName>
</protein>
<evidence type="ECO:0000255" key="1">
    <source>
        <dbReference type="HAMAP-Rule" id="MF_00275"/>
    </source>
</evidence>
<sequence>MNPYEWLETILFFVVLLALIKPFGTYMAKVFQGERTLLSPVFVPCENLLYRICGVDKDDEMGWKRYACAMLLFNLVFAVSLFAMLLLQGILPLNPQKLPAFSWPLALNTAISFTTNTNWQNYGGEAAASYFTQMFGFAVHNFTSAATGIVIAIAAIRGLVRRKSSALGNFWVDTTRCTLYILLPLSLIAAIFLVSQGVIQNFSPYKTVPLVQATSFEKPRLDAKGTPIKDAKGNPVTESVTVKEVTIPMGPVASQEAIKELGTNGGGFFNANSAHPFENPTPLSNIFEVFLILLISGGLTYTFGRMAGNTRQGWALLAVMLAILILAIGVFYRAESSGNPLVAKLGVHGINMEGKETRFGLAGSALFATATTGTSCGAVNTMHDSLTPIGGMVPLSLILLSEVIFGGVGTGLYTMLAFVVIAVFVAGLMIGRTPEYLGKKIEVREMWMSITTVLASGILVLIFSGIAMILPAGVSSMNNSGAHGLSEVLYAFASMSNNNGSAFAGLNGNTLFYNLTGAVAMLLGRFVPAVAVLAMAGGLAEKKYVPPSLGTLPTDQAPFALWLTLVILIVGALTFFPALAMGPIAEQLIMMR</sequence>
<comment type="function">
    <text evidence="1">Part of the high-affinity ATP-driven potassium transport (or Kdp) system, which catalyzes the hydrolysis of ATP coupled with the electrogenic transport of potassium into the cytoplasm. This subunit binds the periplasmic potassium ions and delivers the ions to the membrane domain of KdpB through an intramembrane tunnel.</text>
</comment>
<comment type="subunit">
    <text evidence="1">The system is composed of three essential subunits: KdpA, KdpB and KdpC.</text>
</comment>
<comment type="subcellular location">
    <subcellularLocation>
        <location evidence="1">Cell inner membrane</location>
        <topology evidence="1">Multi-pass membrane protein</topology>
    </subcellularLocation>
</comment>
<comment type="similarity">
    <text evidence="1">Belongs to the KdpA family.</text>
</comment>